<keyword id="KW-0106">Calcium</keyword>
<keyword id="KW-0222">Digestion</keyword>
<keyword id="KW-1015">Disulfide bond</keyword>
<keyword id="KW-0378">Hydrolase</keyword>
<keyword id="KW-0479">Metal-binding</keyword>
<keyword id="KW-0645">Protease</keyword>
<keyword id="KW-1185">Reference proteome</keyword>
<keyword id="KW-0964">Secreted</keyword>
<keyword id="KW-0720">Serine protease</keyword>
<keyword id="KW-0732">Signal</keyword>
<keyword id="KW-0865">Zymogen</keyword>
<organism>
    <name type="scientific">Salmo salar</name>
    <name type="common">Atlantic salmon</name>
    <dbReference type="NCBI Taxonomy" id="8030"/>
    <lineage>
        <taxon>Eukaryota</taxon>
        <taxon>Metazoa</taxon>
        <taxon>Chordata</taxon>
        <taxon>Craniata</taxon>
        <taxon>Vertebrata</taxon>
        <taxon>Euteleostomi</taxon>
        <taxon>Actinopterygii</taxon>
        <taxon>Neopterygii</taxon>
        <taxon>Teleostei</taxon>
        <taxon>Protacanthopterygii</taxon>
        <taxon>Salmoniformes</taxon>
        <taxon>Salmonidae</taxon>
        <taxon>Salmoninae</taxon>
        <taxon>Salmo</taxon>
    </lineage>
</organism>
<name>TRY2_SALSA</name>
<protein>
    <recommendedName>
        <fullName>Trypsin-2</fullName>
        <ecNumber>3.4.21.4</ecNumber>
    </recommendedName>
    <alternativeName>
        <fullName>Trypsin II</fullName>
    </alternativeName>
</protein>
<sequence length="231" mass="24823">AAFATEDDKIVGGYECKAYSQPHQVSLNSGYHFCGGSLVNENWVVSAAHCYQSRVEVRLGEHNIQVTEGSEQFISSSRVIRHPNYSSYNIDNDIMLIKLSKPATLNTYVQPVALPTSCAPAGTMCTVSGWGNTMSSTADKNKLQCLNIPILSYSDCNNSYPGMITNAMFCAGYLEGGKDSCQGDSGGPVVCNGELQGVVSWGYGCAEPGNPGVYAKVCIFNDWLTSTMATY</sequence>
<dbReference type="EC" id="3.4.21.4"/>
<dbReference type="EMBL" id="X70073">
    <property type="protein sequence ID" value="CAA49678.1"/>
    <property type="molecule type" value="mRNA"/>
</dbReference>
<dbReference type="PIR" id="S66658">
    <property type="entry name" value="S31778"/>
</dbReference>
<dbReference type="SMR" id="P35032"/>
<dbReference type="MEROPS" id="S01.125"/>
<dbReference type="Proteomes" id="UP000087266">
    <property type="component" value="Unplaced"/>
</dbReference>
<dbReference type="GO" id="GO:0005615">
    <property type="term" value="C:extracellular space"/>
    <property type="evidence" value="ECO:0007669"/>
    <property type="project" value="TreeGrafter"/>
</dbReference>
<dbReference type="GO" id="GO:0046872">
    <property type="term" value="F:metal ion binding"/>
    <property type="evidence" value="ECO:0007669"/>
    <property type="project" value="UniProtKB-KW"/>
</dbReference>
<dbReference type="GO" id="GO:0004252">
    <property type="term" value="F:serine-type endopeptidase activity"/>
    <property type="evidence" value="ECO:0007669"/>
    <property type="project" value="UniProtKB-EC"/>
</dbReference>
<dbReference type="GO" id="GO:0007586">
    <property type="term" value="P:digestion"/>
    <property type="evidence" value="ECO:0007669"/>
    <property type="project" value="UniProtKB-KW"/>
</dbReference>
<dbReference type="GO" id="GO:0006508">
    <property type="term" value="P:proteolysis"/>
    <property type="evidence" value="ECO:0007669"/>
    <property type="project" value="UniProtKB-KW"/>
</dbReference>
<dbReference type="CDD" id="cd00190">
    <property type="entry name" value="Tryp_SPc"/>
    <property type="match status" value="1"/>
</dbReference>
<dbReference type="FunFam" id="2.40.10.10:FF:000258">
    <property type="entry name" value="Anionic trypsin isoform 1"/>
    <property type="match status" value="1"/>
</dbReference>
<dbReference type="FunFam" id="2.40.10.10:FF:000008">
    <property type="entry name" value="Cationic trypsin"/>
    <property type="match status" value="1"/>
</dbReference>
<dbReference type="Gene3D" id="2.40.10.10">
    <property type="entry name" value="Trypsin-like serine proteases"/>
    <property type="match status" value="2"/>
</dbReference>
<dbReference type="InterPro" id="IPR009003">
    <property type="entry name" value="Peptidase_S1_PA"/>
</dbReference>
<dbReference type="InterPro" id="IPR043504">
    <property type="entry name" value="Peptidase_S1_PA_chymotrypsin"/>
</dbReference>
<dbReference type="InterPro" id="IPR001314">
    <property type="entry name" value="Peptidase_S1A"/>
</dbReference>
<dbReference type="InterPro" id="IPR050127">
    <property type="entry name" value="Serine_Proteases_S1"/>
</dbReference>
<dbReference type="InterPro" id="IPR001254">
    <property type="entry name" value="Trypsin_dom"/>
</dbReference>
<dbReference type="InterPro" id="IPR018114">
    <property type="entry name" value="TRYPSIN_HIS"/>
</dbReference>
<dbReference type="InterPro" id="IPR033116">
    <property type="entry name" value="TRYPSIN_SER"/>
</dbReference>
<dbReference type="PANTHER" id="PTHR24264">
    <property type="entry name" value="TRYPSIN-RELATED"/>
    <property type="match status" value="1"/>
</dbReference>
<dbReference type="PANTHER" id="PTHR24264:SF6">
    <property type="entry name" value="TRYPSINOGEN 1A-RELATED"/>
    <property type="match status" value="1"/>
</dbReference>
<dbReference type="Pfam" id="PF00089">
    <property type="entry name" value="Trypsin"/>
    <property type="match status" value="1"/>
</dbReference>
<dbReference type="PRINTS" id="PR00722">
    <property type="entry name" value="CHYMOTRYPSIN"/>
</dbReference>
<dbReference type="SMART" id="SM00020">
    <property type="entry name" value="Tryp_SPc"/>
    <property type="match status" value="1"/>
</dbReference>
<dbReference type="SUPFAM" id="SSF50494">
    <property type="entry name" value="Trypsin-like serine proteases"/>
    <property type="match status" value="1"/>
</dbReference>
<dbReference type="PROSITE" id="PS50240">
    <property type="entry name" value="TRYPSIN_DOM"/>
    <property type="match status" value="1"/>
</dbReference>
<dbReference type="PROSITE" id="PS00134">
    <property type="entry name" value="TRYPSIN_HIS"/>
    <property type="match status" value="1"/>
</dbReference>
<dbReference type="PROSITE" id="PS00135">
    <property type="entry name" value="TRYPSIN_SER"/>
    <property type="match status" value="1"/>
</dbReference>
<accession>P35032</accession>
<comment type="catalytic activity">
    <reaction>
        <text>Preferential cleavage: Arg-|-Xaa, Lys-|-Xaa.</text>
        <dbReference type="EC" id="3.4.21.4"/>
    </reaction>
</comment>
<comment type="cofactor">
    <cofactor evidence="1">
        <name>Ca(2+)</name>
        <dbReference type="ChEBI" id="CHEBI:29108"/>
    </cofactor>
    <text evidence="1">Binds 1 Ca(2+) ion per subunit.</text>
</comment>
<comment type="subcellular location">
    <subcellularLocation>
        <location>Secreted</location>
        <location>Extracellular space</location>
    </subcellularLocation>
</comment>
<comment type="similarity">
    <text evidence="3">Belongs to the peptidase S1 family.</text>
</comment>
<proteinExistence type="evidence at transcript level"/>
<reference key="1">
    <citation type="journal article" date="1995" name="Eur. J. Biochem.">
        <title>Molecular cloning and characterization of anionic and cationic variants of trypsin from Atlantic salmon.</title>
        <authorList>
            <person name="Male R."/>
            <person name="Lorens J.B."/>
            <person name="Smals A.O."/>
            <person name="Torrissen K.R."/>
        </authorList>
    </citation>
    <scope>NUCLEOTIDE SEQUENCE [MRNA]</scope>
    <source>
        <tissue>Pancreas</tissue>
    </source>
</reference>
<feature type="signal peptide" evidence="2">
    <location>
        <begin position="1" status="less than"/>
        <end position="4"/>
    </location>
</feature>
<feature type="propeptide" id="PRO_0000028227" description="Activation peptide">
    <location>
        <begin position="5"/>
        <end position="9"/>
    </location>
</feature>
<feature type="chain" id="PRO_0000028228" description="Trypsin-2">
    <location>
        <begin position="10"/>
        <end position="231"/>
    </location>
</feature>
<feature type="domain" description="Peptidase S1" evidence="3">
    <location>
        <begin position="10"/>
        <end position="229"/>
    </location>
</feature>
<feature type="active site" description="Charge relay system" evidence="1">
    <location>
        <position position="49"/>
    </location>
</feature>
<feature type="active site" description="Charge relay system" evidence="1">
    <location>
        <position position="93"/>
    </location>
</feature>
<feature type="active site" description="Charge relay system" evidence="1">
    <location>
        <position position="185"/>
    </location>
</feature>
<feature type="binding site" evidence="1">
    <location>
        <position position="61"/>
    </location>
    <ligand>
        <name>Ca(2+)</name>
        <dbReference type="ChEBI" id="CHEBI:29108"/>
    </ligand>
</feature>
<feature type="binding site" evidence="1">
    <location>
        <position position="63"/>
    </location>
    <ligand>
        <name>Ca(2+)</name>
        <dbReference type="ChEBI" id="CHEBI:29108"/>
    </ligand>
</feature>
<feature type="binding site" evidence="1">
    <location>
        <position position="66"/>
    </location>
    <ligand>
        <name>Ca(2+)</name>
        <dbReference type="ChEBI" id="CHEBI:29108"/>
    </ligand>
</feature>
<feature type="binding site" evidence="1">
    <location>
        <position position="71"/>
    </location>
    <ligand>
        <name>Ca(2+)</name>
        <dbReference type="ChEBI" id="CHEBI:29108"/>
    </ligand>
</feature>
<feature type="site" description="Required for specificity" evidence="1">
    <location>
        <position position="179"/>
    </location>
</feature>
<feature type="disulfide bond" evidence="3">
    <location>
        <begin position="16"/>
        <end position="145"/>
    </location>
</feature>
<feature type="disulfide bond" evidence="3">
    <location>
        <begin position="34"/>
        <end position="50"/>
    </location>
</feature>
<feature type="disulfide bond" evidence="3">
    <location>
        <begin position="118"/>
        <end position="218"/>
    </location>
</feature>
<feature type="disulfide bond" evidence="3">
    <location>
        <begin position="125"/>
        <end position="191"/>
    </location>
</feature>
<feature type="disulfide bond" evidence="3">
    <location>
        <begin position="156"/>
        <end position="170"/>
    </location>
</feature>
<feature type="disulfide bond" evidence="3">
    <location>
        <begin position="181"/>
        <end position="205"/>
    </location>
</feature>
<feature type="non-terminal residue">
    <location>
        <position position="1"/>
    </location>
</feature>
<evidence type="ECO:0000250" key="1"/>
<evidence type="ECO:0000255" key="2"/>
<evidence type="ECO:0000255" key="3">
    <source>
        <dbReference type="PROSITE-ProRule" id="PRU00274"/>
    </source>
</evidence>